<keyword id="KW-0067">ATP-binding</keyword>
<keyword id="KW-0903">Direct protein sequencing</keyword>
<keyword id="KW-0436">Ligase</keyword>
<keyword id="KW-0496">Mitochondrion</keyword>
<keyword id="KW-0507">mRNA processing</keyword>
<keyword id="KW-0547">Nucleotide-binding</keyword>
<keyword id="KW-0694">RNA-binding</keyword>
<keyword id="KW-0809">Transit peptide</keyword>
<accession>P86926</accession>
<accession>P82863</accession>
<accession>Q38FA5</accession>
<protein>
    <recommendedName>
        <fullName>RNA-editing ligase 1, mitochondrial</fullName>
        <shortName>RNA ligase 1</shortName>
        <ecNumber evidence="1">6.5.1.3</ecNumber>
    </recommendedName>
</protein>
<gene>
    <name type="primary">REL1</name>
</gene>
<comment type="function">
    <text evidence="3">Essential for RNA editing. RNA editing in kinetoplastid mitochondria inserts and deletes uridylates at multiple sites in pre-mRNAs as directed by guide RNAs.</text>
</comment>
<comment type="catalytic activity">
    <reaction evidence="1">
        <text>ATP + (ribonucleotide)n-3'-hydroxyl + 5'-phospho-(ribonucleotide)m = (ribonucleotide)n+m + AMP + diphosphate.</text>
        <dbReference type="EC" id="6.5.1.3"/>
    </reaction>
</comment>
<comment type="subunit">
    <text evidence="3 4">Component of the RNA editing complex (editosome), a 1600 kDa complex composed of at least 20 proteins (PubMed:11134327, PubMed:19465686). Interacts with terminal uridylyltransferase MEAT1 (PubMed:19465686).</text>
</comment>
<comment type="subcellular location">
    <subcellularLocation>
        <location evidence="3 4">Mitochondrion</location>
    </subcellularLocation>
</comment>
<comment type="similarity">
    <text evidence="5">Belongs to the RNA ligase 2 family.</text>
</comment>
<dbReference type="EC" id="6.5.1.3" evidence="1"/>
<dbReference type="EMBL" id="AY009110">
    <property type="protein sequence ID" value="AAG27062.1"/>
    <property type="molecule type" value="Genomic_DNA"/>
</dbReference>
<dbReference type="SMR" id="P86926"/>
<dbReference type="BindingDB" id="P86926"/>
<dbReference type="ChEMBL" id="CHEMBL4105928"/>
<dbReference type="GO" id="GO:0005737">
    <property type="term" value="C:cytoplasm"/>
    <property type="evidence" value="ECO:0000314"/>
    <property type="project" value="GeneDB"/>
</dbReference>
<dbReference type="GO" id="GO:0020023">
    <property type="term" value="C:kinetoplast"/>
    <property type="evidence" value="ECO:0000314"/>
    <property type="project" value="GeneDB"/>
</dbReference>
<dbReference type="GO" id="GO:0031019">
    <property type="term" value="C:mitochondrial mRNA editing complex"/>
    <property type="evidence" value="ECO:0000314"/>
    <property type="project" value="GeneDB"/>
</dbReference>
<dbReference type="GO" id="GO:0005524">
    <property type="term" value="F:ATP binding"/>
    <property type="evidence" value="ECO:0007669"/>
    <property type="project" value="UniProtKB-KW"/>
</dbReference>
<dbReference type="GO" id="GO:0003723">
    <property type="term" value="F:RNA binding"/>
    <property type="evidence" value="ECO:0007669"/>
    <property type="project" value="UniProtKB-KW"/>
</dbReference>
<dbReference type="GO" id="GO:0003972">
    <property type="term" value="F:RNA ligase (ATP) activity"/>
    <property type="evidence" value="ECO:0000314"/>
    <property type="project" value="UniProtKB"/>
</dbReference>
<dbReference type="GO" id="GO:0006397">
    <property type="term" value="P:mRNA processing"/>
    <property type="evidence" value="ECO:0007669"/>
    <property type="project" value="UniProtKB-KW"/>
</dbReference>
<dbReference type="GO" id="GO:0009451">
    <property type="term" value="P:RNA modification"/>
    <property type="evidence" value="ECO:0000314"/>
    <property type="project" value="GeneDB"/>
</dbReference>
<dbReference type="FunFam" id="3.30.470.30:FF:000019">
    <property type="entry name" value="Mitochondrial RNA ligase 1"/>
    <property type="match status" value="1"/>
</dbReference>
<dbReference type="FunFam" id="1.10.10.1810:FF:000001">
    <property type="entry name" value="RNA-editing ligase 1, mitochondrial"/>
    <property type="match status" value="1"/>
</dbReference>
<dbReference type="Gene3D" id="3.30.1490.70">
    <property type="match status" value="1"/>
</dbReference>
<dbReference type="Gene3D" id="3.30.470.30">
    <property type="entry name" value="DNA ligase/mRNA capping enzyme"/>
    <property type="match status" value="1"/>
</dbReference>
<dbReference type="Gene3D" id="1.10.10.1810">
    <property type="entry name" value="RNA ligase"/>
    <property type="match status" value="1"/>
</dbReference>
<dbReference type="InterPro" id="IPR012647">
    <property type="entry name" value="RNA_lig_RNL2"/>
</dbReference>
<dbReference type="InterPro" id="IPR021122">
    <property type="entry name" value="RNA_ligase_dom_REL/Rnl2"/>
</dbReference>
<dbReference type="InterPro" id="IPR041948">
    <property type="entry name" value="Rnl1/2_C_sf"/>
</dbReference>
<dbReference type="NCBIfam" id="TIGR02307">
    <property type="entry name" value="RNA_lig_RNL2"/>
    <property type="match status" value="1"/>
</dbReference>
<dbReference type="Pfam" id="PF09414">
    <property type="entry name" value="RNA_ligase"/>
    <property type="match status" value="1"/>
</dbReference>
<dbReference type="SUPFAM" id="SSF56091">
    <property type="entry name" value="DNA ligase/mRNA capping enzyme, catalytic domain"/>
    <property type="match status" value="1"/>
</dbReference>
<feature type="transit peptide" description="Mitochondrion" evidence="3">
    <location>
        <begin position="1"/>
        <end position="44"/>
    </location>
</feature>
<feature type="chain" id="PRO_0000411984" description="RNA-editing ligase 1, mitochondrial">
    <location>
        <begin position="45"/>
        <end position="469"/>
    </location>
</feature>
<feature type="region of interest" description="Disordered" evidence="2">
    <location>
        <begin position="450"/>
        <end position="469"/>
    </location>
</feature>
<feature type="active site" description="N6-AMP-lysine intermediate" evidence="1">
    <location>
        <position position="87"/>
    </location>
</feature>
<feature type="binding site" evidence="1">
    <location>
        <begin position="59"/>
        <end position="61"/>
    </location>
    <ligand>
        <name>ATP</name>
        <dbReference type="ChEBI" id="CHEBI:30616"/>
    </ligand>
</feature>
<feature type="binding site" evidence="1">
    <location>
        <begin position="86"/>
        <end position="92"/>
    </location>
    <ligand>
        <name>ATP</name>
        <dbReference type="ChEBI" id="CHEBI:30616"/>
    </ligand>
</feature>
<feature type="binding site" evidence="1">
    <location>
        <position position="111"/>
    </location>
    <ligand>
        <name>ATP</name>
        <dbReference type="ChEBI" id="CHEBI:30616"/>
    </ligand>
</feature>
<feature type="binding site" evidence="1">
    <location>
        <position position="159"/>
    </location>
    <ligand>
        <name>ATP</name>
        <dbReference type="ChEBI" id="CHEBI:30616"/>
    </ligand>
</feature>
<feature type="binding site" evidence="1">
    <location>
        <position position="209"/>
    </location>
    <ligand>
        <name>ATP</name>
        <dbReference type="ChEBI" id="CHEBI:30616"/>
    </ligand>
</feature>
<feature type="binding site" evidence="1">
    <location>
        <begin position="307"/>
        <end position="309"/>
    </location>
    <ligand>
        <name>ATP</name>
        <dbReference type="ChEBI" id="CHEBI:30616"/>
    </ligand>
</feature>
<organism>
    <name type="scientific">Trypanosoma brucei brucei</name>
    <dbReference type="NCBI Taxonomy" id="5702"/>
    <lineage>
        <taxon>Eukaryota</taxon>
        <taxon>Discoba</taxon>
        <taxon>Euglenozoa</taxon>
        <taxon>Kinetoplastea</taxon>
        <taxon>Metakinetoplastina</taxon>
        <taxon>Trypanosomatida</taxon>
        <taxon>Trypanosomatidae</taxon>
        <taxon>Trypanosoma</taxon>
    </lineage>
</organism>
<proteinExistence type="evidence at protein level"/>
<reference key="1">
    <citation type="journal article" date="2001" name="Mol. Cell. Biol.">
        <title>Association of two novel proteins TbMP52 and TbMP48 with the Trypanosoma brucei RNA editing complex.</title>
        <authorList>
            <person name="Panigrahi A.K."/>
            <person name="Gygi S.P."/>
            <person name="Ernst N.L."/>
            <person name="Igo R.P. Jr."/>
            <person name="Palazzo S.S."/>
            <person name="Schnaufer A."/>
            <person name="Weston D.S."/>
            <person name="Carmean N."/>
            <person name="Salavati R."/>
            <person name="Aebersold R."/>
            <person name="Stuart K.D."/>
        </authorList>
    </citation>
    <scope>NUCLEOTIDE SEQUENCE [GENOMIC DNA]</scope>
    <scope>PROTEIN SEQUENCE OF 45-68; 88-107; 137-143; 154-172; 195-245; 300-307; 373-379; 402-409 AND 444-469</scope>
    <scope>FUNCTION</scope>
    <scope>SUBUNIT</scope>
    <scope>SUBCELLULAR LOCATION</scope>
    <source>
        <strain>Treu 427</strain>
    </source>
</reference>
<reference key="2">
    <citation type="journal article" date="2009" name="RNA">
        <title>Novel TUTase associates with an editosome-like complex in mitochondria of Trypanosoma brucei.</title>
        <authorList>
            <person name="Aphasizheva I."/>
            <person name="Ringpis G.E."/>
            <person name="Weng J."/>
            <person name="Gershon P.D."/>
            <person name="Lathrop R.H."/>
            <person name="Aphasizhev R."/>
        </authorList>
    </citation>
    <scope>IDENTIFICATION IN THE RECC COMPLEX</scope>
    <scope>INTERACTION WITH MEAT1</scope>
    <scope>SUBCELLULAR LOCATION</scope>
</reference>
<sequence length="469" mass="52296">MQLQRLGAPLLKRLVGGCIRQSTAPIMPCVVVSGSGVFLTPVRTYMPLPNDQSDFSPYIEIDLPSESRIQSLHKSGLAAQEWVACEKVHGTNFGIYLINQGDHEVVRFAKRSGIMDPNENFFGYHILIDEFTAQIRILNDLLKQKYGLSRVGRLVLNGELFGAKYKHPLVPKSEKWCTLPNGKKFPIAGVQIQREPFPQYSPELHFFAFDIKYSVSGAEEDFVLLGYDEFVEFSSKVPNLLYARALVRGTLDECLAFDVENFMTPLPALLGLGNYPLEGNLAEGVVIRHVRRGDPAVEKHNVSTIIKLRCSSFMELKHPGKQKELKETFIDTVRSGALRRVRGNVTVISDSMLPQVEAAANDLLLNNVSDGRLSNVLSKIGREPLLSGEVSQVDVVLMLAKDALKDFLKEVDSLVLNTTLAFRKLLITNVYFESKRLVEQKWKELMQEEAAAQSEAIPPLSPAAPTKGE</sequence>
<evidence type="ECO:0000250" key="1">
    <source>
        <dbReference type="UniProtKB" id="P86927"/>
    </source>
</evidence>
<evidence type="ECO:0000256" key="2">
    <source>
        <dbReference type="SAM" id="MobiDB-lite"/>
    </source>
</evidence>
<evidence type="ECO:0000269" key="3">
    <source>
    </source>
</evidence>
<evidence type="ECO:0000269" key="4">
    <source>
    </source>
</evidence>
<evidence type="ECO:0000305" key="5"/>
<name>RLGM1_TRYBB</name>